<gene>
    <name evidence="1" type="primary">hisE</name>
    <name type="ordered locus">Rsph17029_0916</name>
</gene>
<evidence type="ECO:0000255" key="1">
    <source>
        <dbReference type="HAMAP-Rule" id="MF_01020"/>
    </source>
</evidence>
<protein>
    <recommendedName>
        <fullName evidence="1">Phosphoribosyl-ATP pyrophosphatase</fullName>
        <shortName evidence="1">PRA-PH</shortName>
        <ecNumber evidence="1">3.6.1.31</ecNumber>
    </recommendedName>
</protein>
<comment type="catalytic activity">
    <reaction evidence="1">
        <text>1-(5-phospho-beta-D-ribosyl)-ATP + H2O = 1-(5-phospho-beta-D-ribosyl)-5'-AMP + diphosphate + H(+)</text>
        <dbReference type="Rhea" id="RHEA:22828"/>
        <dbReference type="ChEBI" id="CHEBI:15377"/>
        <dbReference type="ChEBI" id="CHEBI:15378"/>
        <dbReference type="ChEBI" id="CHEBI:33019"/>
        <dbReference type="ChEBI" id="CHEBI:59457"/>
        <dbReference type="ChEBI" id="CHEBI:73183"/>
        <dbReference type="EC" id="3.6.1.31"/>
    </reaction>
</comment>
<comment type="pathway">
    <text evidence="1">Amino-acid biosynthesis; L-histidine biosynthesis; L-histidine from 5-phospho-alpha-D-ribose 1-diphosphate: step 2/9.</text>
</comment>
<comment type="subcellular location">
    <subcellularLocation>
        <location evidence="1">Cytoplasm</location>
    </subcellularLocation>
</comment>
<comment type="similarity">
    <text evidence="1">Belongs to the PRA-PH family.</text>
</comment>
<reference key="1">
    <citation type="submission" date="2007-02" db="EMBL/GenBank/DDBJ databases">
        <title>Complete sequence of chromosome 1 of Rhodobacter sphaeroides ATCC 17029.</title>
        <authorList>
            <person name="Copeland A."/>
            <person name="Lucas S."/>
            <person name="Lapidus A."/>
            <person name="Barry K."/>
            <person name="Detter J.C."/>
            <person name="Glavina del Rio T."/>
            <person name="Hammon N."/>
            <person name="Israni S."/>
            <person name="Dalin E."/>
            <person name="Tice H."/>
            <person name="Pitluck S."/>
            <person name="Kiss H."/>
            <person name="Brettin T."/>
            <person name="Bruce D."/>
            <person name="Han C."/>
            <person name="Tapia R."/>
            <person name="Gilna P."/>
            <person name="Schmutz J."/>
            <person name="Larimer F."/>
            <person name="Land M."/>
            <person name="Hauser L."/>
            <person name="Kyrpides N."/>
            <person name="Mikhailova N."/>
            <person name="Richardson P."/>
            <person name="Mackenzie C."/>
            <person name="Choudhary M."/>
            <person name="Donohue T.J."/>
            <person name="Kaplan S."/>
        </authorList>
    </citation>
    <scope>NUCLEOTIDE SEQUENCE [LARGE SCALE GENOMIC DNA]</scope>
    <source>
        <strain>ATCC 17029 / ATH 2.4.9</strain>
    </source>
</reference>
<feature type="chain" id="PRO_1000063379" description="Phosphoribosyl-ATP pyrophosphatase">
    <location>
        <begin position="1"/>
        <end position="103"/>
    </location>
</feature>
<dbReference type="EC" id="3.6.1.31" evidence="1"/>
<dbReference type="EMBL" id="CP000577">
    <property type="protein sequence ID" value="ABN76027.1"/>
    <property type="molecule type" value="Genomic_DNA"/>
</dbReference>
<dbReference type="RefSeq" id="WP_002719401.1">
    <property type="nucleotide sequence ID" value="NC_009049.1"/>
</dbReference>
<dbReference type="SMR" id="A3PI61"/>
<dbReference type="KEGG" id="rsh:Rsph17029_0916"/>
<dbReference type="HOGENOM" id="CLU_123337_1_1_5"/>
<dbReference type="UniPathway" id="UPA00031">
    <property type="reaction ID" value="UER00007"/>
</dbReference>
<dbReference type="GO" id="GO:0005737">
    <property type="term" value="C:cytoplasm"/>
    <property type="evidence" value="ECO:0007669"/>
    <property type="project" value="UniProtKB-SubCell"/>
</dbReference>
<dbReference type="GO" id="GO:0005524">
    <property type="term" value="F:ATP binding"/>
    <property type="evidence" value="ECO:0007669"/>
    <property type="project" value="UniProtKB-KW"/>
</dbReference>
<dbReference type="GO" id="GO:0004636">
    <property type="term" value="F:phosphoribosyl-ATP diphosphatase activity"/>
    <property type="evidence" value="ECO:0007669"/>
    <property type="project" value="UniProtKB-UniRule"/>
</dbReference>
<dbReference type="GO" id="GO:0000105">
    <property type="term" value="P:L-histidine biosynthetic process"/>
    <property type="evidence" value="ECO:0007669"/>
    <property type="project" value="UniProtKB-UniRule"/>
</dbReference>
<dbReference type="CDD" id="cd11534">
    <property type="entry name" value="NTP-PPase_HisIE_like"/>
    <property type="match status" value="1"/>
</dbReference>
<dbReference type="Gene3D" id="1.10.287.1080">
    <property type="entry name" value="MazG-like"/>
    <property type="match status" value="1"/>
</dbReference>
<dbReference type="HAMAP" id="MF_01020">
    <property type="entry name" value="HisE"/>
    <property type="match status" value="1"/>
</dbReference>
<dbReference type="InterPro" id="IPR008179">
    <property type="entry name" value="HisE"/>
</dbReference>
<dbReference type="InterPro" id="IPR021130">
    <property type="entry name" value="PRib-ATP_PPHydrolase-like"/>
</dbReference>
<dbReference type="NCBIfam" id="TIGR03188">
    <property type="entry name" value="histidine_hisI"/>
    <property type="match status" value="1"/>
</dbReference>
<dbReference type="NCBIfam" id="NF001611">
    <property type="entry name" value="PRK00400.1-3"/>
    <property type="match status" value="1"/>
</dbReference>
<dbReference type="NCBIfam" id="NF001613">
    <property type="entry name" value="PRK00400.1-5"/>
    <property type="match status" value="1"/>
</dbReference>
<dbReference type="PANTHER" id="PTHR42945">
    <property type="entry name" value="HISTIDINE BIOSYNTHESIS BIFUNCTIONAL PROTEIN"/>
    <property type="match status" value="1"/>
</dbReference>
<dbReference type="PANTHER" id="PTHR42945:SF1">
    <property type="entry name" value="HISTIDINE BIOSYNTHESIS BIFUNCTIONAL PROTEIN HIS7"/>
    <property type="match status" value="1"/>
</dbReference>
<dbReference type="Pfam" id="PF01503">
    <property type="entry name" value="PRA-PH"/>
    <property type="match status" value="1"/>
</dbReference>
<dbReference type="SUPFAM" id="SSF101386">
    <property type="entry name" value="all-alpha NTP pyrophosphatases"/>
    <property type="match status" value="1"/>
</dbReference>
<accession>A3PI61</accession>
<sequence>MTVLERLAATVEARKGADPDSSWTAKLLAKGPEKCAEKFGEEAVEAIIEAVRGDRARLASEAADVLYHLLVMLAARDVTLAEVMAVLEAREGTSGIAEKAGRG</sequence>
<organism>
    <name type="scientific">Cereibacter sphaeroides (strain ATCC 17029 / ATH 2.4.9)</name>
    <name type="common">Rhodobacter sphaeroides</name>
    <dbReference type="NCBI Taxonomy" id="349101"/>
    <lineage>
        <taxon>Bacteria</taxon>
        <taxon>Pseudomonadati</taxon>
        <taxon>Pseudomonadota</taxon>
        <taxon>Alphaproteobacteria</taxon>
        <taxon>Rhodobacterales</taxon>
        <taxon>Paracoccaceae</taxon>
        <taxon>Cereibacter</taxon>
    </lineage>
</organism>
<name>HIS2_CERS1</name>
<proteinExistence type="inferred from homology"/>
<keyword id="KW-0028">Amino-acid biosynthesis</keyword>
<keyword id="KW-0067">ATP-binding</keyword>
<keyword id="KW-0963">Cytoplasm</keyword>
<keyword id="KW-0368">Histidine biosynthesis</keyword>
<keyword id="KW-0378">Hydrolase</keyword>
<keyword id="KW-0547">Nucleotide-binding</keyword>